<keyword id="KW-1003">Cell membrane</keyword>
<keyword id="KW-0963">Cytoplasm</keyword>
<keyword id="KW-0967">Endosome</keyword>
<keyword id="KW-0333">Golgi apparatus</keyword>
<keyword id="KW-0445">Lipid transport</keyword>
<keyword id="KW-0446">Lipid-binding</keyword>
<keyword id="KW-0472">Membrane</keyword>
<keyword id="KW-0539">Nucleus</keyword>
<keyword id="KW-1185">Reference proteome</keyword>
<keyword id="KW-0813">Transport</keyword>
<organism>
    <name type="scientific">Bos taurus</name>
    <name type="common">Bovine</name>
    <dbReference type="NCBI Taxonomy" id="9913"/>
    <lineage>
        <taxon>Eukaryota</taxon>
        <taxon>Metazoa</taxon>
        <taxon>Chordata</taxon>
        <taxon>Craniata</taxon>
        <taxon>Vertebrata</taxon>
        <taxon>Euteleostomi</taxon>
        <taxon>Mammalia</taxon>
        <taxon>Eutheria</taxon>
        <taxon>Laurasiatheria</taxon>
        <taxon>Artiodactyla</taxon>
        <taxon>Ruminantia</taxon>
        <taxon>Pecora</taxon>
        <taxon>Bovidae</taxon>
        <taxon>Bovinae</taxon>
        <taxon>Bos</taxon>
    </lineage>
</organism>
<evidence type="ECO:0000250" key="1">
    <source>
        <dbReference type="UniProtKB" id="Q5TA50"/>
    </source>
</evidence>
<evidence type="ECO:0000305" key="2"/>
<name>CPTP_BOVIN</name>
<feature type="chain" id="PRO_0000317155" description="Ceramide-1-phosphate transfer protein">
    <location>
        <begin position="1"/>
        <end position="214"/>
    </location>
</feature>
<feature type="binding site" evidence="1">
    <location>
        <position position="56"/>
    </location>
    <ligand>
        <name>an N-acylsphingoid base 1-phosphate</name>
        <dbReference type="ChEBI" id="CHEBI:84404"/>
    </ligand>
</feature>
<feature type="binding site" evidence="1">
    <location>
        <position position="60"/>
    </location>
    <ligand>
        <name>an N-acylsphingoid base 1-phosphate</name>
        <dbReference type="ChEBI" id="CHEBI:84404"/>
    </ligand>
</feature>
<feature type="binding site" evidence="1">
    <location>
        <position position="106"/>
    </location>
    <ligand>
        <name>an N-acylsphingoid base 1-phosphate</name>
        <dbReference type="ChEBI" id="CHEBI:84404"/>
    </ligand>
</feature>
<feature type="binding site" evidence="1">
    <location>
        <position position="110"/>
    </location>
    <ligand>
        <name>an N-acylsphingoid base 1-phosphate</name>
        <dbReference type="ChEBI" id="CHEBI:84404"/>
    </ligand>
</feature>
<feature type="binding site" evidence="1">
    <location>
        <position position="150"/>
    </location>
    <ligand>
        <name>an N-acylsphingoid base 1-phosphate</name>
        <dbReference type="ChEBI" id="CHEBI:84404"/>
    </ligand>
</feature>
<gene>
    <name type="primary">CPTP</name>
    <name type="synonym">GLTPD1</name>
</gene>
<accession>Q0VCQ0</accession>
<proteinExistence type="evidence at transcript level"/>
<sequence>MDDLESEFNLKVVLVSFKQCLNEKEEVLLEYYLAGWRGLVRFLNSLGTIFSFISKDVVTKLQIMDQLRSGPQQEHYSSLQAMVAYEVGNQLVDLERRSRHPDSGCRTVLRLHRALRWLQLFLEGVRTSPEDARTSVLCTDSYNASLATYHPWIIRRAVTVAFCALPTRKVFLESMNVGSSEQAVEMLNEALPFIERVYNISQKLYAEHALLDLP</sequence>
<reference key="1">
    <citation type="submission" date="2006-08" db="EMBL/GenBank/DDBJ databases">
        <authorList>
            <consortium name="NIH - Mammalian Gene Collection (MGC) project"/>
        </authorList>
    </citation>
    <scope>NUCLEOTIDE SEQUENCE [LARGE SCALE MRNA]</scope>
    <source>
        <strain>Hereford</strain>
        <tissue>Fetal liver</tissue>
    </source>
</reference>
<dbReference type="EMBL" id="BC120059">
    <property type="protein sequence ID" value="AAI20060.1"/>
    <property type="molecule type" value="mRNA"/>
</dbReference>
<dbReference type="RefSeq" id="NP_001068650.1">
    <property type="nucleotide sequence ID" value="NM_001075182.3"/>
</dbReference>
<dbReference type="RefSeq" id="XP_005217094.1">
    <property type="nucleotide sequence ID" value="XM_005217037.3"/>
</dbReference>
<dbReference type="RefSeq" id="XP_005217095.1">
    <property type="nucleotide sequence ID" value="XM_005217038.4"/>
</dbReference>
<dbReference type="SMR" id="Q0VCQ0"/>
<dbReference type="FunCoup" id="Q0VCQ0">
    <property type="interactions" value="1597"/>
</dbReference>
<dbReference type="STRING" id="9913.ENSBTAP00000010025"/>
<dbReference type="PaxDb" id="9913-ENSBTAP00000010025"/>
<dbReference type="GeneID" id="505009"/>
<dbReference type="KEGG" id="bta:505009"/>
<dbReference type="CTD" id="80772"/>
<dbReference type="VEuPathDB" id="HostDB:ENSBTAG00000007623"/>
<dbReference type="eggNOG" id="KOG4189">
    <property type="taxonomic scope" value="Eukaryota"/>
</dbReference>
<dbReference type="HOGENOM" id="CLU_079649_1_0_1"/>
<dbReference type="InParanoid" id="Q0VCQ0"/>
<dbReference type="OMA" id="ICTDSYN"/>
<dbReference type="OrthoDB" id="116883at2759"/>
<dbReference type="TreeFam" id="TF316097"/>
<dbReference type="Reactome" id="R-BTA-9845576">
    <property type="pathway name" value="Glycosphingolipid transport"/>
</dbReference>
<dbReference type="Proteomes" id="UP000009136">
    <property type="component" value="Chromosome 16"/>
</dbReference>
<dbReference type="Bgee" id="ENSBTAG00000007623">
    <property type="expression patterns" value="Expressed in zone of skin and 105 other cell types or tissues"/>
</dbReference>
<dbReference type="GO" id="GO:0005829">
    <property type="term" value="C:cytosol"/>
    <property type="evidence" value="ECO:0000318"/>
    <property type="project" value="GO_Central"/>
</dbReference>
<dbReference type="GO" id="GO:0010008">
    <property type="term" value="C:endosome membrane"/>
    <property type="evidence" value="ECO:0007669"/>
    <property type="project" value="UniProtKB-SubCell"/>
</dbReference>
<dbReference type="GO" id="GO:0005794">
    <property type="term" value="C:Golgi apparatus"/>
    <property type="evidence" value="ECO:0007669"/>
    <property type="project" value="UniProtKB-SubCell"/>
</dbReference>
<dbReference type="GO" id="GO:0005640">
    <property type="term" value="C:nuclear outer membrane"/>
    <property type="evidence" value="ECO:0007669"/>
    <property type="project" value="UniProtKB-SubCell"/>
</dbReference>
<dbReference type="GO" id="GO:0005886">
    <property type="term" value="C:plasma membrane"/>
    <property type="evidence" value="ECO:0007669"/>
    <property type="project" value="UniProtKB-SubCell"/>
</dbReference>
<dbReference type="GO" id="GO:1902387">
    <property type="term" value="F:ceramide 1-phosphate binding"/>
    <property type="evidence" value="ECO:0000250"/>
    <property type="project" value="UniProtKB"/>
</dbReference>
<dbReference type="GO" id="GO:1902388">
    <property type="term" value="F:ceramide 1-phosphate transfer activity"/>
    <property type="evidence" value="ECO:0000250"/>
    <property type="project" value="UniProtKB"/>
</dbReference>
<dbReference type="GO" id="GO:0005543">
    <property type="term" value="F:phospholipid binding"/>
    <property type="evidence" value="ECO:0000250"/>
    <property type="project" value="UniProtKB"/>
</dbReference>
<dbReference type="GO" id="GO:1902389">
    <property type="term" value="P:ceramide 1-phosphate transport"/>
    <property type="evidence" value="ECO:0000250"/>
    <property type="project" value="UniProtKB"/>
</dbReference>
<dbReference type="GO" id="GO:0035627">
    <property type="term" value="P:ceramide transport"/>
    <property type="evidence" value="ECO:0000318"/>
    <property type="project" value="GO_Central"/>
</dbReference>
<dbReference type="GO" id="GO:0120009">
    <property type="term" value="P:intermembrane lipid transfer"/>
    <property type="evidence" value="ECO:0000318"/>
    <property type="project" value="GO_Central"/>
</dbReference>
<dbReference type="GO" id="GO:0010507">
    <property type="term" value="P:negative regulation of autophagy"/>
    <property type="evidence" value="ECO:0000250"/>
    <property type="project" value="UniProtKB"/>
</dbReference>
<dbReference type="GO" id="GO:0032691">
    <property type="term" value="P:negative regulation of interleukin-1 beta production"/>
    <property type="evidence" value="ECO:0000250"/>
    <property type="project" value="UniProtKB"/>
</dbReference>
<dbReference type="GO" id="GO:1900226">
    <property type="term" value="P:negative regulation of NLRP3 inflammasome complex assembly"/>
    <property type="evidence" value="ECO:0000250"/>
    <property type="project" value="UniProtKB"/>
</dbReference>
<dbReference type="FunFam" id="1.10.3520.10:FF:000002">
    <property type="entry name" value="Ceramide-1-phosphate transfer protein"/>
    <property type="match status" value="1"/>
</dbReference>
<dbReference type="Gene3D" id="1.10.3520.10">
    <property type="entry name" value="Glycolipid transfer protein"/>
    <property type="match status" value="1"/>
</dbReference>
<dbReference type="InterPro" id="IPR036497">
    <property type="entry name" value="GLTP_sf"/>
</dbReference>
<dbReference type="InterPro" id="IPR014830">
    <property type="entry name" value="Glycolipid_transfer_prot_dom"/>
</dbReference>
<dbReference type="PANTHER" id="PTHR10219:SF20">
    <property type="entry name" value="CERAMIDE-1-PHOSPHATE TRANSFER PROTEIN"/>
    <property type="match status" value="1"/>
</dbReference>
<dbReference type="PANTHER" id="PTHR10219">
    <property type="entry name" value="GLYCOLIPID TRANSFER PROTEIN-RELATED"/>
    <property type="match status" value="1"/>
</dbReference>
<dbReference type="Pfam" id="PF08718">
    <property type="entry name" value="GLTP"/>
    <property type="match status" value="1"/>
</dbReference>
<dbReference type="SUPFAM" id="SSF110004">
    <property type="entry name" value="Glycolipid transfer protein, GLTP"/>
    <property type="match status" value="1"/>
</dbReference>
<protein>
    <recommendedName>
        <fullName>Ceramide-1-phosphate transfer protein</fullName>
    </recommendedName>
    <alternativeName>
        <fullName>Glycolipid transfer protein domain-containing protein 1</fullName>
        <shortName>CPTP</shortName>
    </alternativeName>
</protein>
<comment type="function">
    <text evidence="1">Mediates the intracellular transfer of ceramide-1-phosphate (C1P) between organelle membranes and the cell membrane. Required for normal structure of the Golgi stacks. Can bind phosphoceramides with a variety of aliphatic chains, but has a preference for lipids with saturated C16:0 or monounsaturated C18:1 aliphatic chains, and is inefficient with phosphoceramides containing lignoceryl (C24:0). Plays a role in the regulation of the cellular levels of ceramide-1-phosphate, and thereby contributes to the regulation of phospholipase PLA2G4A activity and the release of arachidonic acid. Has no activity with galactosylceramide, lactosylceramide, sphingomyelin, phosphatidylcholine, phosphatidic acid and ceramide. C1P transfer is stimulated by phosphatidylserine in C1P source vesicles. Regulates autophagy, inflammasome mediated IL1B and IL18 processing, and pyroptosis, but not apoptosis.</text>
</comment>
<comment type="catalytic activity">
    <reaction evidence="1">
        <text>N-(hexadecanoyl)-sphing-4-enine-1-phosphate(in) = N-(hexadecanoyl)-sphing-4-enine-1-phosphate(out)</text>
        <dbReference type="Rhea" id="RHEA:45680"/>
        <dbReference type="ChEBI" id="CHEBI:72963"/>
    </reaction>
    <physiologicalReaction direction="left-to-right" evidence="1">
        <dbReference type="Rhea" id="RHEA:45681"/>
    </physiologicalReaction>
</comment>
<comment type="catalytic activity">
    <reaction evidence="1">
        <text>N-(9Z-octadecenoyl)-sphing-4-enine-1-phosphate(in) = N-(9Z-octadecenoyl)-sphing-4-enine-1-phosphate(out)</text>
        <dbReference type="Rhea" id="RHEA:45688"/>
        <dbReference type="ChEBI" id="CHEBI:85378"/>
    </reaction>
    <physiologicalReaction direction="left-to-right" evidence="1">
        <dbReference type="Rhea" id="RHEA:45689"/>
    </physiologicalReaction>
</comment>
<comment type="subcellular location">
    <subcellularLocation>
        <location evidence="1">Cytoplasm</location>
        <location evidence="1">Cytosol</location>
    </subcellularLocation>
    <subcellularLocation>
        <location evidence="1">Golgi apparatus</location>
        <location evidence="1">trans-Golgi network membrane</location>
        <topology evidence="1">Peripheral membrane protein</topology>
    </subcellularLocation>
    <subcellularLocation>
        <location evidence="1">Cell membrane</location>
        <topology evidence="1">Peripheral membrane protein</topology>
        <orientation evidence="1">Cytoplasmic side</orientation>
    </subcellularLocation>
    <subcellularLocation>
        <location evidence="1">Endosome membrane</location>
        <topology evidence="1">Peripheral membrane protein</topology>
    </subcellularLocation>
    <subcellularLocation>
        <location evidence="1">Nucleus outer membrane</location>
        <topology evidence="1">Peripheral membrane protein</topology>
    </subcellularLocation>
</comment>
<comment type="similarity">
    <text evidence="2">Belongs to the GLTP family.</text>
</comment>